<sequence>DGYIKGNKGCKVSCVINNVFCNSMCKSSGGSYGYCWSWGLACWCEGLPAAKKWLYAATNTCG</sequence>
<proteinExistence type="evidence at protein level"/>
<organism>
    <name type="scientific">Hottentotta tamulus sindicus</name>
    <name type="common">Scorpion</name>
    <name type="synonym">Buthus sindicus</name>
    <dbReference type="NCBI Taxonomy" id="42519"/>
    <lineage>
        <taxon>Eukaryota</taxon>
        <taxon>Metazoa</taxon>
        <taxon>Ecdysozoa</taxon>
        <taxon>Arthropoda</taxon>
        <taxon>Chelicerata</taxon>
        <taxon>Arachnida</taxon>
        <taxon>Scorpiones</taxon>
        <taxon>Buthida</taxon>
        <taxon>Buthoidea</taxon>
        <taxon>Buthidae</taxon>
        <taxon>Mesobuthus</taxon>
    </lineage>
</organism>
<protein>
    <recommendedName>
        <fullName>Insect toxin BsIT4</fullName>
        <shortName>Insect toxin 4</shortName>
    </recommendedName>
    <alternativeName>
        <fullName>Bs-dprIT4</fullName>
    </alternativeName>
</protein>
<name>SIX4_HOTTS</name>
<feature type="chain" id="PRO_0000066721" description="Insect toxin BsIT4">
    <location>
        <begin position="1"/>
        <end position="62"/>
    </location>
</feature>
<feature type="domain" description="LCN-type CS-alpha/beta" evidence="1">
    <location>
        <begin position="1"/>
        <end position="62"/>
    </location>
</feature>
<feature type="disulfide bond" evidence="1">
    <location>
        <begin position="10"/>
        <end position="61"/>
    </location>
</feature>
<feature type="disulfide bond" evidence="1">
    <location>
        <begin position="14"/>
        <end position="35"/>
    </location>
</feature>
<feature type="disulfide bond" evidence="1">
    <location>
        <begin position="21"/>
        <end position="42"/>
    </location>
</feature>
<feature type="disulfide bond" evidence="1">
    <location>
        <begin position="25"/>
        <end position="44"/>
    </location>
</feature>
<keyword id="KW-0903">Direct protein sequencing</keyword>
<keyword id="KW-1015">Disulfide bond</keyword>
<keyword id="KW-0872">Ion channel impairing toxin</keyword>
<keyword id="KW-0528">Neurotoxin</keyword>
<keyword id="KW-0964">Secreted</keyword>
<keyword id="KW-0800">Toxin</keyword>
<keyword id="KW-0738">Voltage-gated sodium channel impairing toxin</keyword>
<reference key="1">
    <citation type="journal article" date="2001" name="Arch. Biochem. Biophys.">
        <title>Purification, characterization, and primary structure of four depressant insect-selective neurotoxin analogs from scorpion (Buthus sindicus) venom.</title>
        <authorList>
            <person name="Ali S.A."/>
            <person name="Stoeva S."/>
            <person name="Grossmann J.G."/>
            <person name="Abbasi A."/>
            <person name="Voelter W."/>
        </authorList>
    </citation>
    <scope>PROTEIN SEQUENCE</scope>
    <scope>FUNCTION</scope>
    <scope>TOXIC DOSE</scope>
    <scope>MASS SPECTROMETRY</scope>
    <source>
        <tissue>Venom</tissue>
    </source>
</reference>
<dbReference type="PIR" id="D59352">
    <property type="entry name" value="D59352"/>
</dbReference>
<dbReference type="SMR" id="P82814"/>
<dbReference type="GO" id="GO:0005576">
    <property type="term" value="C:extracellular region"/>
    <property type="evidence" value="ECO:0007669"/>
    <property type="project" value="UniProtKB-SubCell"/>
</dbReference>
<dbReference type="GO" id="GO:0019871">
    <property type="term" value="F:sodium channel inhibitor activity"/>
    <property type="evidence" value="ECO:0007669"/>
    <property type="project" value="InterPro"/>
</dbReference>
<dbReference type="GO" id="GO:0090729">
    <property type="term" value="F:toxin activity"/>
    <property type="evidence" value="ECO:0007669"/>
    <property type="project" value="UniProtKB-KW"/>
</dbReference>
<dbReference type="GO" id="GO:0006952">
    <property type="term" value="P:defense response"/>
    <property type="evidence" value="ECO:0007669"/>
    <property type="project" value="InterPro"/>
</dbReference>
<dbReference type="CDD" id="cd23106">
    <property type="entry name" value="neurotoxins_LC_scorpion"/>
    <property type="match status" value="1"/>
</dbReference>
<dbReference type="Gene3D" id="3.30.30.10">
    <property type="entry name" value="Knottin, scorpion toxin-like"/>
    <property type="match status" value="1"/>
</dbReference>
<dbReference type="InterPro" id="IPR044062">
    <property type="entry name" value="LCN-type_CS_alpha_beta_dom"/>
</dbReference>
<dbReference type="InterPro" id="IPR003614">
    <property type="entry name" value="Scorpion_toxin-like"/>
</dbReference>
<dbReference type="InterPro" id="IPR036574">
    <property type="entry name" value="Scorpion_toxin-like_sf"/>
</dbReference>
<dbReference type="InterPro" id="IPR018218">
    <property type="entry name" value="Scorpion_toxinL"/>
</dbReference>
<dbReference type="InterPro" id="IPR002061">
    <property type="entry name" value="Scorpion_toxinL/defensin"/>
</dbReference>
<dbReference type="Pfam" id="PF00537">
    <property type="entry name" value="Toxin_3"/>
    <property type="match status" value="1"/>
</dbReference>
<dbReference type="PRINTS" id="PR00285">
    <property type="entry name" value="SCORPNTOXIN"/>
</dbReference>
<dbReference type="SMART" id="SM00505">
    <property type="entry name" value="Knot1"/>
    <property type="match status" value="1"/>
</dbReference>
<dbReference type="SUPFAM" id="SSF57095">
    <property type="entry name" value="Scorpion toxin-like"/>
    <property type="match status" value="1"/>
</dbReference>
<dbReference type="PROSITE" id="PS51863">
    <property type="entry name" value="LCN_CSAB"/>
    <property type="match status" value="1"/>
</dbReference>
<evidence type="ECO:0000255" key="1">
    <source>
        <dbReference type="PROSITE-ProRule" id="PRU01210"/>
    </source>
</evidence>
<evidence type="ECO:0000269" key="2">
    <source>
    </source>
</evidence>
<evidence type="ECO:0000305" key="3"/>
<comment type="function">
    <text evidence="2">Depressant insect beta-toxins cause a transient contraction paralysis followed by a slow flaccid paralysis. They bind voltage-independently at site-4 of sodium channels (Nav) and shift the voltage of activation toward more negative potentials thereby affecting sodium channel activation and promoting spontaneous and repetitive firing. This toxin is active only on insects.</text>
</comment>
<comment type="subcellular location">
    <subcellularLocation>
        <location>Secreted</location>
    </subcellularLocation>
</comment>
<comment type="tissue specificity">
    <text>Expressed by the venom gland.</text>
</comment>
<comment type="domain">
    <text evidence="3">Has the structural arrangement of an alpha-helix connected to antiparallel beta-sheets by disulfide bonds (CS-alpha/beta).</text>
</comment>
<comment type="mass spectrometry"/>
<comment type="toxic dose">
    <text evidence="2">LD(50) is 142 ng/100 mg of body weight of cockroach (B.germanica) and 78 ng/100 mg of body weight of blowfly larvae (S.falculata).</text>
</comment>
<comment type="similarity">
    <text evidence="3">Belongs to the long (4 C-C) scorpion toxin superfamily. Sodium channel inhibitor family. Beta subfamily.</text>
</comment>
<accession>P82814</accession>